<gene>
    <name type="primary">RPB5</name>
    <name type="ordered locus">YALI0D06457g</name>
</gene>
<proteinExistence type="inferred from homology"/>
<accession>Q6CA26</accession>
<feature type="chain" id="PRO_0000146085" description="DNA-directed RNA polymerases I, II, and III subunit RPABC1">
    <location>
        <begin position="1"/>
        <end position="212"/>
    </location>
</feature>
<keyword id="KW-0240">DNA-directed RNA polymerase</keyword>
<keyword id="KW-0539">Nucleus</keyword>
<keyword id="KW-1185">Reference proteome</keyword>
<keyword id="KW-0804">Transcription</keyword>
<protein>
    <recommendedName>
        <fullName>DNA-directed RNA polymerases I, II, and III subunit RPABC1</fullName>
        <shortName>RNA polymerases I, II, and III subunit ABC1</shortName>
    </recommendedName>
</protein>
<sequence length="212" mass="24403">MSSDDAQKLWKVYRTAKELVKDRGYTITDKEVNLSFDQFVSEMCDPMGKPIKKKMCFMASPSPEAIEKFPEMGNIWVEFCEEASVTVKTMRNFCIHISENKFATGILVYENNMTPSANRLIPSVAPATIDTFQETDLLVNITKHVLVPTHIKLSGAEKKFLLERYRLKESQLPRIQREDPVARYLGLRRGQIVKIIRRSETSGRYASYRICL</sequence>
<name>RPAB1_YARLI</name>
<evidence type="ECO:0000250" key="1"/>
<evidence type="ECO:0000305" key="2"/>
<dbReference type="EMBL" id="CR382130">
    <property type="protein sequence ID" value="CAG80674.1"/>
    <property type="molecule type" value="Genomic_DNA"/>
</dbReference>
<dbReference type="RefSeq" id="XP_502486.1">
    <property type="nucleotide sequence ID" value="XM_502486.1"/>
</dbReference>
<dbReference type="SMR" id="Q6CA26"/>
<dbReference type="FunCoup" id="Q6CA26">
    <property type="interactions" value="1116"/>
</dbReference>
<dbReference type="STRING" id="284591.Q6CA26"/>
<dbReference type="EnsemblFungi" id="CAG80674">
    <property type="protein sequence ID" value="CAG80674"/>
    <property type="gene ID" value="YALI0_D06457g"/>
</dbReference>
<dbReference type="KEGG" id="yli:2910489"/>
<dbReference type="VEuPathDB" id="FungiDB:YALI0_D06457g"/>
<dbReference type="HOGENOM" id="CLU_058320_0_0_1"/>
<dbReference type="InParanoid" id="Q6CA26"/>
<dbReference type="OMA" id="VRDRGYF"/>
<dbReference type="OrthoDB" id="103892at4891"/>
<dbReference type="Proteomes" id="UP000001300">
    <property type="component" value="Chromosome D"/>
</dbReference>
<dbReference type="GO" id="GO:0005736">
    <property type="term" value="C:RNA polymerase I complex"/>
    <property type="evidence" value="ECO:0000318"/>
    <property type="project" value="GO_Central"/>
</dbReference>
<dbReference type="GO" id="GO:0005665">
    <property type="term" value="C:RNA polymerase II, core complex"/>
    <property type="evidence" value="ECO:0000318"/>
    <property type="project" value="GO_Central"/>
</dbReference>
<dbReference type="GO" id="GO:0005666">
    <property type="term" value="C:RNA polymerase III complex"/>
    <property type="evidence" value="ECO:0000318"/>
    <property type="project" value="GO_Central"/>
</dbReference>
<dbReference type="GO" id="GO:0003677">
    <property type="term" value="F:DNA binding"/>
    <property type="evidence" value="ECO:0007669"/>
    <property type="project" value="InterPro"/>
</dbReference>
<dbReference type="GO" id="GO:0003899">
    <property type="term" value="F:DNA-directed RNA polymerase activity"/>
    <property type="evidence" value="ECO:0007669"/>
    <property type="project" value="EnsemblFungi"/>
</dbReference>
<dbReference type="GO" id="GO:0003968">
    <property type="term" value="F:RNA-directed RNA polymerase activity"/>
    <property type="evidence" value="ECO:0007669"/>
    <property type="project" value="EnsemblFungi"/>
</dbReference>
<dbReference type="GO" id="GO:0006363">
    <property type="term" value="P:termination of RNA polymerase I transcription"/>
    <property type="evidence" value="ECO:0007669"/>
    <property type="project" value="EnsemblFungi"/>
</dbReference>
<dbReference type="GO" id="GO:0006386">
    <property type="term" value="P:termination of RNA polymerase III transcription"/>
    <property type="evidence" value="ECO:0007669"/>
    <property type="project" value="EnsemblFungi"/>
</dbReference>
<dbReference type="GO" id="GO:0006366">
    <property type="term" value="P:transcription by RNA polymerase II"/>
    <property type="evidence" value="ECO:0000318"/>
    <property type="project" value="GO_Central"/>
</dbReference>
<dbReference type="GO" id="GO:0006362">
    <property type="term" value="P:transcription elongation by RNA polymerase I"/>
    <property type="evidence" value="ECO:0000318"/>
    <property type="project" value="GO_Central"/>
</dbReference>
<dbReference type="GO" id="GO:0006368">
    <property type="term" value="P:transcription elongation by RNA polymerase II"/>
    <property type="evidence" value="ECO:0007669"/>
    <property type="project" value="EnsemblFungi"/>
</dbReference>
<dbReference type="GO" id="GO:0006361">
    <property type="term" value="P:transcription initiation at RNA polymerase I promoter"/>
    <property type="evidence" value="ECO:0007669"/>
    <property type="project" value="EnsemblFungi"/>
</dbReference>
<dbReference type="GO" id="GO:0006367">
    <property type="term" value="P:transcription initiation at RNA polymerase II promoter"/>
    <property type="evidence" value="ECO:0007669"/>
    <property type="project" value="EnsemblFungi"/>
</dbReference>
<dbReference type="GO" id="GO:0006384">
    <property type="term" value="P:transcription initiation at RNA polymerase III promoter"/>
    <property type="evidence" value="ECO:0007669"/>
    <property type="project" value="EnsemblFungi"/>
</dbReference>
<dbReference type="GO" id="GO:0042797">
    <property type="term" value="P:tRNA transcription by RNA polymerase III"/>
    <property type="evidence" value="ECO:0000318"/>
    <property type="project" value="GO_Central"/>
</dbReference>
<dbReference type="FunFam" id="3.40.1340.10:FF:000002">
    <property type="entry name" value="DNA-directed RNA polymerases I, II, and III subunit RPABC1"/>
    <property type="match status" value="1"/>
</dbReference>
<dbReference type="FunFam" id="3.90.940.20:FF:000001">
    <property type="entry name" value="DNA-directed RNA polymerases I, II, and III subunit RPABC1"/>
    <property type="match status" value="1"/>
</dbReference>
<dbReference type="Gene3D" id="3.40.1340.10">
    <property type="entry name" value="RNA polymerase, Rpb5, N-terminal domain"/>
    <property type="match status" value="1"/>
</dbReference>
<dbReference type="Gene3D" id="3.90.940.20">
    <property type="entry name" value="RPB5-like RNA polymerase subunit"/>
    <property type="match status" value="1"/>
</dbReference>
<dbReference type="HAMAP" id="MF_00025">
    <property type="entry name" value="RNApol_Rpo5_RPB5"/>
    <property type="match status" value="1"/>
</dbReference>
<dbReference type="InterPro" id="IPR014381">
    <property type="entry name" value="Arch_Rpo5/euc_Rpb5"/>
</dbReference>
<dbReference type="InterPro" id="IPR005571">
    <property type="entry name" value="RNA_pol_Rpb5_N"/>
</dbReference>
<dbReference type="InterPro" id="IPR036710">
    <property type="entry name" value="RNA_pol_Rpb5_N_sf"/>
</dbReference>
<dbReference type="InterPro" id="IPR000783">
    <property type="entry name" value="RNA_pol_subH/Rpb5_C"/>
</dbReference>
<dbReference type="InterPro" id="IPR020608">
    <property type="entry name" value="RNA_pol_subH/Rpb5_CS"/>
</dbReference>
<dbReference type="InterPro" id="IPR035913">
    <property type="entry name" value="RPB5-like_sf"/>
</dbReference>
<dbReference type="PANTHER" id="PTHR10535">
    <property type="entry name" value="DNA-DIRECTED RNA POLYMERASES I, II, AND III SUBUNIT RPABC1"/>
    <property type="match status" value="1"/>
</dbReference>
<dbReference type="PANTHER" id="PTHR10535:SF0">
    <property type="entry name" value="DNA-DIRECTED RNA POLYMERASES I, II, AND III SUBUNIT RPABC1"/>
    <property type="match status" value="1"/>
</dbReference>
<dbReference type="Pfam" id="PF01191">
    <property type="entry name" value="RNA_pol_Rpb5_C"/>
    <property type="match status" value="1"/>
</dbReference>
<dbReference type="Pfam" id="PF03871">
    <property type="entry name" value="RNA_pol_Rpb5_N"/>
    <property type="match status" value="1"/>
</dbReference>
<dbReference type="PIRSF" id="PIRSF000747">
    <property type="entry name" value="RPB5"/>
    <property type="match status" value="1"/>
</dbReference>
<dbReference type="SUPFAM" id="SSF53036">
    <property type="entry name" value="Eukaryotic RPB5 N-terminal domain"/>
    <property type="match status" value="1"/>
</dbReference>
<dbReference type="SUPFAM" id="SSF55287">
    <property type="entry name" value="RPB5-like RNA polymerase subunit"/>
    <property type="match status" value="1"/>
</dbReference>
<dbReference type="PROSITE" id="PS01110">
    <property type="entry name" value="RNA_POL_H_23KD"/>
    <property type="match status" value="1"/>
</dbReference>
<organism>
    <name type="scientific">Yarrowia lipolytica (strain CLIB 122 / E 150)</name>
    <name type="common">Yeast</name>
    <name type="synonym">Candida lipolytica</name>
    <dbReference type="NCBI Taxonomy" id="284591"/>
    <lineage>
        <taxon>Eukaryota</taxon>
        <taxon>Fungi</taxon>
        <taxon>Dikarya</taxon>
        <taxon>Ascomycota</taxon>
        <taxon>Saccharomycotina</taxon>
        <taxon>Dipodascomycetes</taxon>
        <taxon>Dipodascales</taxon>
        <taxon>Dipodascales incertae sedis</taxon>
        <taxon>Yarrowia</taxon>
    </lineage>
</organism>
<reference key="1">
    <citation type="journal article" date="2004" name="Nature">
        <title>Genome evolution in yeasts.</title>
        <authorList>
            <person name="Dujon B."/>
            <person name="Sherman D."/>
            <person name="Fischer G."/>
            <person name="Durrens P."/>
            <person name="Casaregola S."/>
            <person name="Lafontaine I."/>
            <person name="de Montigny J."/>
            <person name="Marck C."/>
            <person name="Neuveglise C."/>
            <person name="Talla E."/>
            <person name="Goffard N."/>
            <person name="Frangeul L."/>
            <person name="Aigle M."/>
            <person name="Anthouard V."/>
            <person name="Babour A."/>
            <person name="Barbe V."/>
            <person name="Barnay S."/>
            <person name="Blanchin S."/>
            <person name="Beckerich J.-M."/>
            <person name="Beyne E."/>
            <person name="Bleykasten C."/>
            <person name="Boisrame A."/>
            <person name="Boyer J."/>
            <person name="Cattolico L."/>
            <person name="Confanioleri F."/>
            <person name="de Daruvar A."/>
            <person name="Despons L."/>
            <person name="Fabre E."/>
            <person name="Fairhead C."/>
            <person name="Ferry-Dumazet H."/>
            <person name="Groppi A."/>
            <person name="Hantraye F."/>
            <person name="Hennequin C."/>
            <person name="Jauniaux N."/>
            <person name="Joyet P."/>
            <person name="Kachouri R."/>
            <person name="Kerrest A."/>
            <person name="Koszul R."/>
            <person name="Lemaire M."/>
            <person name="Lesur I."/>
            <person name="Ma L."/>
            <person name="Muller H."/>
            <person name="Nicaud J.-M."/>
            <person name="Nikolski M."/>
            <person name="Oztas S."/>
            <person name="Ozier-Kalogeropoulos O."/>
            <person name="Pellenz S."/>
            <person name="Potier S."/>
            <person name="Richard G.-F."/>
            <person name="Straub M.-L."/>
            <person name="Suleau A."/>
            <person name="Swennen D."/>
            <person name="Tekaia F."/>
            <person name="Wesolowski-Louvel M."/>
            <person name="Westhof E."/>
            <person name="Wirth B."/>
            <person name="Zeniou-Meyer M."/>
            <person name="Zivanovic Y."/>
            <person name="Bolotin-Fukuhara M."/>
            <person name="Thierry A."/>
            <person name="Bouchier C."/>
            <person name="Caudron B."/>
            <person name="Scarpelli C."/>
            <person name="Gaillardin C."/>
            <person name="Weissenbach J."/>
            <person name="Wincker P."/>
            <person name="Souciet J.-L."/>
        </authorList>
    </citation>
    <scope>NUCLEOTIDE SEQUENCE [LARGE SCALE GENOMIC DNA]</scope>
    <source>
        <strain>CLIB 122 / E 150</strain>
    </source>
</reference>
<comment type="function">
    <text evidence="1">DNA-dependent RNA polymerase catalyzes the transcription of DNA into RNA using the four ribonucleoside triphosphates as substrates. Common component of RNA polymerases I, II and III which synthesize ribosomal RNA precursors, mRNA precursors and many functional non-coding RNAs, and small RNAs, such as 5S rRNA and tRNAs, respectively. Pol II is the central component of the basal RNA polymerase II transcription machinery. Pols are composed of mobile elements that move relative to each other. In Pol II, RPB5 is part of the lower jaw surrounding the central large cleft and thought to grab the incoming DNA template. Seems to be the major component in this process (By similarity).</text>
</comment>
<comment type="subunit">
    <text evidence="1">Component of the RNA polymerase I (Pol I), RNA polymerase II (Pol II) and RNA polymerase III (Pol III) complexes consisting of at least 14, 12 and 17 subunits, respectively.</text>
</comment>
<comment type="subcellular location">
    <subcellularLocation>
        <location evidence="1">Nucleus</location>
    </subcellularLocation>
</comment>
<comment type="similarity">
    <text evidence="2">Belongs to the archaeal Rpo5/eukaryotic RPB5 RNA polymerase subunit family.</text>
</comment>